<comment type="subcellular location">
    <subcellularLocation>
        <location>Spore wall</location>
    </subcellularLocation>
</comment>
<comment type="similarity">
    <text evidence="2">Belongs to the SWP12 family.</text>
</comment>
<organism>
    <name type="scientific">Enterocytozoon bieneusi (strain H348)</name>
    <name type="common">Microsporidian parasite</name>
    <dbReference type="NCBI Taxonomy" id="481877"/>
    <lineage>
        <taxon>Eukaryota</taxon>
        <taxon>Fungi</taxon>
        <taxon>Fungi incertae sedis</taxon>
        <taxon>Microsporidia</taxon>
        <taxon>Enterocytozoonidae</taxon>
        <taxon>Enterocytozoon</taxon>
    </lineage>
</organism>
<proteinExistence type="inferred from homology"/>
<feature type="chain" id="PRO_0000382914" description="Spore wall protein 12">
    <location>
        <begin position="1"/>
        <end position="228"/>
    </location>
</feature>
<feature type="coiled-coil region" evidence="1">
    <location>
        <begin position="115"/>
        <end position="195"/>
    </location>
</feature>
<feature type="glycosylation site" description="N-linked (GlcNAc...) asparagine" evidence="1">
    <location>
        <position position="88"/>
    </location>
</feature>
<evidence type="ECO:0000255" key="1"/>
<evidence type="ECO:0000305" key="2"/>
<sequence>MYQETKRYIERKLKKIEYIYTKLPDGYEDIEIRYRKVRDEIGILQNVVNGLTYYEYGGTVMKNVAHWANIVGESTNINAIKREDIYTNTSTVGMQLAHTVSDKSLKEVCTEFSTAYENIAIEKRKMNEKMEDVTDELNNLKKKCKQIDHQRHIVKNIRYDLEELLQSNVYKEDIKNRLEKKLESNGKEIQEQMTDFVHLSMINGIIVKIAKIHKEFCEAAGNHLEKFN</sequence>
<gene>
    <name type="primary">SWP12</name>
    <name type="ORF">EBI_25395</name>
</gene>
<reference key="1">
    <citation type="journal article" date="2007" name="PLoS ONE">
        <title>Patterns of genome evolution among the microsporidian parasites Encephalitozoon cuniculi, Antonospora locustae and Enterocytozoon bieneusi.</title>
        <authorList>
            <person name="Corradi N."/>
            <person name="Akiyoshi D.E."/>
            <person name="Morrison H.G."/>
            <person name="Feng X."/>
            <person name="Weiss L.M."/>
            <person name="Tzipori S."/>
            <person name="Keeling P.J."/>
        </authorList>
    </citation>
    <scope>NUCLEOTIDE SEQUENCE [LARGE SCALE GENOMIC DNA]</scope>
    <source>
        <strain>H348</strain>
    </source>
</reference>
<reference key="2">
    <citation type="journal article" date="2009" name="PLoS Pathog.">
        <title>Genomic survey of the non-cultivatable opportunistic human pathogen, Enterocytozoon bieneusi.</title>
        <authorList>
            <person name="Akiyoshi D.E."/>
            <person name="Morrison H.G."/>
            <person name="Lei S."/>
            <person name="Feng X."/>
            <person name="Zhang Q."/>
            <person name="Corradi N."/>
            <person name="Mayanja H."/>
            <person name="Tumwine J.K."/>
            <person name="Keeling P.J."/>
            <person name="Weiss L.M."/>
            <person name="Tzipori S."/>
        </authorList>
    </citation>
    <scope>NUCLEOTIDE SEQUENCE [LARGE SCALE GENOMIC DNA]</scope>
    <source>
        <strain>H348</strain>
    </source>
</reference>
<keyword id="KW-0175">Coiled coil</keyword>
<keyword id="KW-0325">Glycoprotein</keyword>
<keyword id="KW-0749">Sporulation</keyword>
<name>SWP12_ENTBH</name>
<dbReference type="EMBL" id="ABGB01000015">
    <property type="protein sequence ID" value="EED44522.1"/>
    <property type="molecule type" value="Genomic_DNA"/>
</dbReference>
<dbReference type="RefSeq" id="XP_002649503.1">
    <property type="nucleotide sequence ID" value="XM_002649457.1"/>
</dbReference>
<dbReference type="SMR" id="B7XHM5"/>
<dbReference type="GlyCosmos" id="B7XHM5">
    <property type="glycosylation" value="1 site, No reported glycans"/>
</dbReference>
<dbReference type="VEuPathDB" id="MicrosporidiaDB:EBI_25395"/>
<dbReference type="HOGENOM" id="CLU_098346_0_0_1"/>
<dbReference type="InParanoid" id="B7XHM5"/>
<dbReference type="OMA" id="IDYVNAD"/>
<dbReference type="OrthoDB" id="2191916at2759"/>
<dbReference type="GO" id="GO:0031160">
    <property type="term" value="C:spore wall"/>
    <property type="evidence" value="ECO:0007669"/>
    <property type="project" value="UniProtKB-SubCell"/>
</dbReference>
<dbReference type="GO" id="GO:0030435">
    <property type="term" value="P:sporulation resulting in formation of a cellular spore"/>
    <property type="evidence" value="ECO:0007669"/>
    <property type="project" value="UniProtKB-KW"/>
</dbReference>
<dbReference type="Gene3D" id="1.20.1270.60">
    <property type="entry name" value="Arfaptin homology (AH) domain/BAR domain"/>
    <property type="match status" value="1"/>
</dbReference>
<dbReference type="InterPro" id="IPR027267">
    <property type="entry name" value="AH/BAR_dom_sf"/>
</dbReference>
<dbReference type="SUPFAM" id="SSF103657">
    <property type="entry name" value="BAR/IMD domain-like"/>
    <property type="match status" value="1"/>
</dbReference>
<accession>B7XHM5</accession>
<protein>
    <recommendedName>
        <fullName>Spore wall protein 12</fullName>
    </recommendedName>
</protein>